<accession>P0CV32</accession>
<keyword id="KW-0325">Glycoprotein</keyword>
<keyword id="KW-1035">Host cytoplasm</keyword>
<keyword id="KW-1048">Host nucleus</keyword>
<keyword id="KW-0964">Secreted</keyword>
<keyword id="KW-0732">Signal</keyword>
<keyword id="KW-0843">Virulence</keyword>
<reference key="1">
    <citation type="journal article" date="2018" name="Front. Plant Sci.">
        <title>In planta functional analysis and subcellular localization of the oomycete pathogen Plasmopara viticola candidate RXLR effector repertoire.</title>
        <authorList>
            <person name="Liu Y."/>
            <person name="Lan X."/>
            <person name="Song S."/>
            <person name="Yin L."/>
            <person name="Dry I.B."/>
            <person name="Qu J."/>
            <person name="Xiang J."/>
            <person name="Lu J."/>
        </authorList>
    </citation>
    <scope>NUCLEOTIDE SEQUENCE [MRNA]</scope>
    <scope>DOMAIN</scope>
    <scope>FUNCTION</scope>
    <scope>SUBCELLULAR LOCATION</scope>
</reference>
<proteinExistence type="inferred from homology"/>
<evidence type="ECO:0000255" key="1"/>
<evidence type="ECO:0000255" key="2">
    <source>
        <dbReference type="PROSITE-ProRule" id="PRU00498"/>
    </source>
</evidence>
<evidence type="ECO:0000269" key="3">
    <source>
    </source>
</evidence>
<evidence type="ECO:0000303" key="4">
    <source>
    </source>
</evidence>
<evidence type="ECO:0000305" key="5"/>
<evidence type="ECO:0000305" key="6">
    <source>
    </source>
</evidence>
<organism>
    <name type="scientific">Plasmopara viticola</name>
    <name type="common">Downy mildew of grapevine</name>
    <name type="synonym">Botrytis viticola</name>
    <dbReference type="NCBI Taxonomy" id="143451"/>
    <lineage>
        <taxon>Eukaryota</taxon>
        <taxon>Sar</taxon>
        <taxon>Stramenopiles</taxon>
        <taxon>Oomycota</taxon>
        <taxon>Peronosporales</taxon>
        <taxon>Peronosporaceae</taxon>
        <taxon>Plasmopara</taxon>
    </lineage>
</organism>
<protein>
    <recommendedName>
        <fullName evidence="4">Secreted RxLR effector protein 89</fullName>
    </recommendedName>
</protein>
<gene>
    <name evidence="4" type="primary">RXLR89</name>
</gene>
<feature type="signal peptide" evidence="1">
    <location>
        <begin position="1"/>
        <end position="22"/>
    </location>
</feature>
<feature type="chain" id="PRO_0000447941" description="Secreted RxLR effector protein 89">
    <location>
        <begin position="23"/>
        <end position="110"/>
    </location>
</feature>
<feature type="short sequence motif" description="RxLR-dEER" evidence="6">
    <location>
        <begin position="61"/>
        <end position="74"/>
    </location>
</feature>
<feature type="glycosylation site" description="N-linked (GlcNAc...) asparagine" evidence="2">
    <location>
        <position position="29"/>
    </location>
</feature>
<comment type="function">
    <text evidence="3">Secreted effector that completely suppresses the host cell death induced by cell death-inducing proteins.</text>
</comment>
<comment type="subcellular location">
    <subcellularLocation>
        <location evidence="3">Secreted</location>
    </subcellularLocation>
    <subcellularLocation>
        <location evidence="3">Host nucleus</location>
    </subcellularLocation>
    <subcellularLocation>
        <location evidence="3">Host cytoplasm</location>
    </subcellularLocation>
</comment>
<comment type="domain">
    <text evidence="6">The RxLR-dEER motif acts to carry the protein into the host cell cytoplasm through binding to cell surface phosphatidylinositol-3-phosphate.</text>
</comment>
<comment type="similarity">
    <text evidence="5">Belongs to the RxLR effector family.</text>
</comment>
<name>RLR89_PLAVT</name>
<sequence>MTSVVIVVSVAVLLGVLVITDSSWPCVFNSTAKWSLQHIESVTLERPRWSRVKKPSSSKWRHLRTILQWWQERRKQAHLLDTWQKQAMDMDECLTRYRDAKHDDICVISE</sequence>
<dbReference type="SMR" id="P0CV32"/>
<dbReference type="GlyCosmos" id="P0CV32">
    <property type="glycosylation" value="1 site, No reported glycans"/>
</dbReference>
<dbReference type="GO" id="GO:0005576">
    <property type="term" value="C:extracellular region"/>
    <property type="evidence" value="ECO:0007669"/>
    <property type="project" value="UniProtKB-SubCell"/>
</dbReference>
<dbReference type="GO" id="GO:0030430">
    <property type="term" value="C:host cell cytoplasm"/>
    <property type="evidence" value="ECO:0007669"/>
    <property type="project" value="UniProtKB-SubCell"/>
</dbReference>
<dbReference type="GO" id="GO:0042025">
    <property type="term" value="C:host cell nucleus"/>
    <property type="evidence" value="ECO:0007669"/>
    <property type="project" value="UniProtKB-SubCell"/>
</dbReference>